<keyword id="KW-0004">4Fe-4S</keyword>
<keyword id="KW-0067">ATP-binding</keyword>
<keyword id="KW-0963">Cytoplasm</keyword>
<keyword id="KW-0408">Iron</keyword>
<keyword id="KW-0411">Iron-sulfur</keyword>
<keyword id="KW-0460">Magnesium</keyword>
<keyword id="KW-0479">Metal-binding</keyword>
<keyword id="KW-0547">Nucleotide-binding</keyword>
<keyword id="KW-1185">Reference proteome</keyword>
<keyword id="KW-0694">RNA-binding</keyword>
<keyword id="KW-0808">Transferase</keyword>
<keyword id="KW-0819">tRNA processing</keyword>
<keyword id="KW-0820">tRNA-binding</keyword>
<evidence type="ECO:0000255" key="1">
    <source>
        <dbReference type="HAMAP-Rule" id="MF_01850"/>
    </source>
</evidence>
<evidence type="ECO:0000256" key="2">
    <source>
        <dbReference type="SAM" id="MobiDB-lite"/>
    </source>
</evidence>
<dbReference type="EC" id="2.8.1.-" evidence="1"/>
<dbReference type="EMBL" id="AE013598">
    <property type="protein sequence ID" value="AAW77670.1"/>
    <property type="molecule type" value="Genomic_DNA"/>
</dbReference>
<dbReference type="SMR" id="Q5GUF3"/>
<dbReference type="STRING" id="291331.XOO4416"/>
<dbReference type="KEGG" id="xoo:XOO4416"/>
<dbReference type="PATRIC" id="fig|291331.8.peg.4903"/>
<dbReference type="HOGENOM" id="CLU_026481_0_1_6"/>
<dbReference type="Proteomes" id="UP000006735">
    <property type="component" value="Chromosome"/>
</dbReference>
<dbReference type="GO" id="GO:0005737">
    <property type="term" value="C:cytoplasm"/>
    <property type="evidence" value="ECO:0007669"/>
    <property type="project" value="UniProtKB-SubCell"/>
</dbReference>
<dbReference type="GO" id="GO:0051539">
    <property type="term" value="F:4 iron, 4 sulfur cluster binding"/>
    <property type="evidence" value="ECO:0007669"/>
    <property type="project" value="UniProtKB-UniRule"/>
</dbReference>
<dbReference type="GO" id="GO:0005524">
    <property type="term" value="F:ATP binding"/>
    <property type="evidence" value="ECO:0007669"/>
    <property type="project" value="UniProtKB-UniRule"/>
</dbReference>
<dbReference type="GO" id="GO:0000287">
    <property type="term" value="F:magnesium ion binding"/>
    <property type="evidence" value="ECO:0007669"/>
    <property type="project" value="UniProtKB-UniRule"/>
</dbReference>
<dbReference type="GO" id="GO:0016783">
    <property type="term" value="F:sulfurtransferase activity"/>
    <property type="evidence" value="ECO:0007669"/>
    <property type="project" value="UniProtKB-UniRule"/>
</dbReference>
<dbReference type="GO" id="GO:0000049">
    <property type="term" value="F:tRNA binding"/>
    <property type="evidence" value="ECO:0007669"/>
    <property type="project" value="UniProtKB-KW"/>
</dbReference>
<dbReference type="GO" id="GO:0034227">
    <property type="term" value="P:tRNA thio-modification"/>
    <property type="evidence" value="ECO:0007669"/>
    <property type="project" value="UniProtKB-UniRule"/>
</dbReference>
<dbReference type="CDD" id="cd24138">
    <property type="entry name" value="TtcA-like"/>
    <property type="match status" value="1"/>
</dbReference>
<dbReference type="Gene3D" id="3.40.50.620">
    <property type="entry name" value="HUPs"/>
    <property type="match status" value="1"/>
</dbReference>
<dbReference type="HAMAP" id="MF_01850">
    <property type="entry name" value="TtcA"/>
    <property type="match status" value="1"/>
</dbReference>
<dbReference type="InterPro" id="IPR014729">
    <property type="entry name" value="Rossmann-like_a/b/a_fold"/>
</dbReference>
<dbReference type="InterPro" id="IPR011063">
    <property type="entry name" value="TilS/TtcA_N"/>
</dbReference>
<dbReference type="InterPro" id="IPR012089">
    <property type="entry name" value="tRNA_Cyd_32_2_STrfase"/>
</dbReference>
<dbReference type="InterPro" id="IPR035107">
    <property type="entry name" value="tRNA_thiolation_TtcA_Ctu1"/>
</dbReference>
<dbReference type="NCBIfam" id="NF007972">
    <property type="entry name" value="PRK10696.1"/>
    <property type="match status" value="1"/>
</dbReference>
<dbReference type="PANTHER" id="PTHR43686:SF1">
    <property type="entry name" value="AMINOTRAN_5 DOMAIN-CONTAINING PROTEIN"/>
    <property type="match status" value="1"/>
</dbReference>
<dbReference type="PANTHER" id="PTHR43686">
    <property type="entry name" value="SULFURTRANSFERASE-RELATED"/>
    <property type="match status" value="1"/>
</dbReference>
<dbReference type="Pfam" id="PF01171">
    <property type="entry name" value="ATP_bind_3"/>
    <property type="match status" value="1"/>
</dbReference>
<dbReference type="PIRSF" id="PIRSF004976">
    <property type="entry name" value="ATPase_YdaO"/>
    <property type="match status" value="1"/>
</dbReference>
<dbReference type="SUPFAM" id="SSF52402">
    <property type="entry name" value="Adenine nucleotide alpha hydrolases-like"/>
    <property type="match status" value="1"/>
</dbReference>
<reference key="1">
    <citation type="journal article" date="2005" name="Nucleic Acids Res.">
        <title>The genome sequence of Xanthomonas oryzae pathovar oryzae KACC10331, the bacterial blight pathogen of rice.</title>
        <authorList>
            <person name="Lee B.-M."/>
            <person name="Park Y.-J."/>
            <person name="Park D.-S."/>
            <person name="Kang H.-W."/>
            <person name="Kim J.-G."/>
            <person name="Song E.-S."/>
            <person name="Park I.-C."/>
            <person name="Yoon U.-H."/>
            <person name="Hahn J.-H."/>
            <person name="Koo B.-S."/>
            <person name="Lee G.-B."/>
            <person name="Kim H."/>
            <person name="Park H.-S."/>
            <person name="Yoon K.-O."/>
            <person name="Kim J.-H."/>
            <person name="Jung C.-H."/>
            <person name="Koh N.-H."/>
            <person name="Seo J.-S."/>
            <person name="Go S.-J."/>
        </authorList>
    </citation>
    <scope>NUCLEOTIDE SEQUENCE [LARGE SCALE GENOMIC DNA]</scope>
    <source>
        <strain>KACC10331 / KXO85</strain>
    </source>
</reference>
<organism>
    <name type="scientific">Xanthomonas oryzae pv. oryzae (strain KACC10331 / KXO85)</name>
    <dbReference type="NCBI Taxonomy" id="291331"/>
    <lineage>
        <taxon>Bacteria</taxon>
        <taxon>Pseudomonadati</taxon>
        <taxon>Pseudomonadota</taxon>
        <taxon>Gammaproteobacteria</taxon>
        <taxon>Lysobacterales</taxon>
        <taxon>Lysobacteraceae</taxon>
        <taxon>Xanthomonas</taxon>
    </lineage>
</organism>
<proteinExistence type="inferred from homology"/>
<name>TTCA_XANOR</name>
<comment type="function">
    <text evidence="1">Catalyzes the ATP-dependent 2-thiolation of cytidine in position 32 of tRNA, to form 2-thiocytidine (s(2)C32). The sulfur atoms are provided by the cysteine/cysteine desulfurase (IscS) system.</text>
</comment>
<comment type="catalytic activity">
    <reaction evidence="1">
        <text>cytidine(32) in tRNA + S-sulfanyl-L-cysteinyl-[cysteine desulfurase] + AH2 + ATP = 2-thiocytidine(32) in tRNA + L-cysteinyl-[cysteine desulfurase] + A + AMP + diphosphate + H(+)</text>
        <dbReference type="Rhea" id="RHEA:57048"/>
        <dbReference type="Rhea" id="RHEA-COMP:10288"/>
        <dbReference type="Rhea" id="RHEA-COMP:12157"/>
        <dbReference type="Rhea" id="RHEA-COMP:12158"/>
        <dbReference type="Rhea" id="RHEA-COMP:14821"/>
        <dbReference type="ChEBI" id="CHEBI:13193"/>
        <dbReference type="ChEBI" id="CHEBI:15378"/>
        <dbReference type="ChEBI" id="CHEBI:17499"/>
        <dbReference type="ChEBI" id="CHEBI:29950"/>
        <dbReference type="ChEBI" id="CHEBI:30616"/>
        <dbReference type="ChEBI" id="CHEBI:33019"/>
        <dbReference type="ChEBI" id="CHEBI:61963"/>
        <dbReference type="ChEBI" id="CHEBI:82748"/>
        <dbReference type="ChEBI" id="CHEBI:141453"/>
        <dbReference type="ChEBI" id="CHEBI:456215"/>
    </reaction>
    <physiologicalReaction direction="left-to-right" evidence="1">
        <dbReference type="Rhea" id="RHEA:57049"/>
    </physiologicalReaction>
</comment>
<comment type="cofactor">
    <cofactor evidence="1">
        <name>Mg(2+)</name>
        <dbReference type="ChEBI" id="CHEBI:18420"/>
    </cofactor>
</comment>
<comment type="cofactor">
    <cofactor evidence="1">
        <name>[4Fe-4S] cluster</name>
        <dbReference type="ChEBI" id="CHEBI:49883"/>
    </cofactor>
    <text evidence="1">Binds 1 [4Fe-4S] cluster per subunit. The cluster is chelated by three Cys residues, the fourth Fe has a free coordination site that may bind a sulfur atom transferred from the persulfide of IscS.</text>
</comment>
<comment type="pathway">
    <text evidence="1">tRNA modification.</text>
</comment>
<comment type="subunit">
    <text evidence="1">Homodimer.</text>
</comment>
<comment type="subcellular location">
    <subcellularLocation>
        <location evidence="1">Cytoplasm</location>
    </subcellularLocation>
</comment>
<comment type="miscellaneous">
    <text evidence="1">The thiolation reaction likely consists of two steps: a first activation step by ATP to form an adenylated intermediate of the target base of tRNA, and a second nucleophilic substitution step of the sulfur (S) atom supplied by the hydrosulfide attached to the Fe-S cluster.</text>
</comment>
<comment type="similarity">
    <text evidence="1">Belongs to the TtcA family.</text>
</comment>
<sequence length="305" mass="33723">MTAVLPLPHPLADPAPRDPRQRLQREQLRLGKRLQRQVGQAIADFGMISPGDKIMVCLSGGKDSYTMLDMLLQLQRKAPVPFTLVAVNLDQKQPDFPAHVLPAYLDALGVPFDIVEQDTYSVVSRVVPAGKTMCSLCSRLRRGALYAYAQTHGVTKIALGHHRDDIVATFFMNLFHHARLAAMAPKLRSDDGAHVVIRPLAYVREAHIAAYAQARQFPIIPCNLCGSQENLQRQQVGKMLQHWDHEQPGRVEQIARALGDVRPEQLADRTLFDFLALGRSGDAPPDLAPDPGAWLTASDATHDSD</sequence>
<accession>Q5GUF3</accession>
<feature type="chain" id="PRO_0000348873" description="tRNA-cytidine(32) 2-sulfurtransferase">
    <location>
        <begin position="1"/>
        <end position="305"/>
    </location>
</feature>
<feature type="region of interest" description="Disordered" evidence="2">
    <location>
        <begin position="1"/>
        <end position="20"/>
    </location>
</feature>
<feature type="region of interest" description="Disordered" evidence="2">
    <location>
        <begin position="282"/>
        <end position="305"/>
    </location>
</feature>
<feature type="short sequence motif" description="PP-loop motif" evidence="1">
    <location>
        <begin position="59"/>
        <end position="64"/>
    </location>
</feature>
<feature type="compositionally biased region" description="Low complexity" evidence="2">
    <location>
        <begin position="282"/>
        <end position="293"/>
    </location>
</feature>
<feature type="binding site" evidence="1">
    <location>
        <position position="134"/>
    </location>
    <ligand>
        <name>[4Fe-4S] cluster</name>
        <dbReference type="ChEBI" id="CHEBI:49883"/>
    </ligand>
</feature>
<feature type="binding site" evidence="1">
    <location>
        <position position="137"/>
    </location>
    <ligand>
        <name>[4Fe-4S] cluster</name>
        <dbReference type="ChEBI" id="CHEBI:49883"/>
    </ligand>
</feature>
<feature type="binding site" evidence="1">
    <location>
        <position position="225"/>
    </location>
    <ligand>
        <name>[4Fe-4S] cluster</name>
        <dbReference type="ChEBI" id="CHEBI:49883"/>
    </ligand>
</feature>
<protein>
    <recommendedName>
        <fullName evidence="1">tRNA-cytidine(32) 2-sulfurtransferase</fullName>
        <ecNumber evidence="1">2.8.1.-</ecNumber>
    </recommendedName>
    <alternativeName>
        <fullName evidence="1">Two-thiocytidine biosynthesis protein A</fullName>
    </alternativeName>
    <alternativeName>
        <fullName evidence="1">tRNA 2-thiocytidine biosynthesis protein TtcA</fullName>
    </alternativeName>
</protein>
<gene>
    <name evidence="1" type="primary">ttcA</name>
    <name type="ordered locus">XOO4416</name>
</gene>